<accession>Q0W5A6</accession>
<sequence length="359" mass="39326">MKAAAITPGKKDSLRVIDVDRPRPGAGEVLVRMLEAGVCGTDEELNLGIIGEAPAGSDYLIIGHENLGVVEEAGKDVRAFRKGDLVVATVRRSCPGMCFACRTGQPDMCDSDDYLERGIKGMHGYMAEYYTERPENLIPVPQSLRKVAVLLEPLSIVEKGIEQAFKIQERMIWRPRRALVAGAGPIGLLAALILRDVGLEVSTFATRSRESLKARIAEAAGIEYFNVKETPIEQIAELQGPLDMIVEATGSSEIAFKAIGLTDSNGIVCLTGLSPEQRTHSVCTDCVNQDLVMHNKAVFGTVSSNRVHFERGIDRLTSIERRWPGLLERMFSRRVRLENVKEGLKGDKEDVKVLVEIGA</sequence>
<organism>
    <name type="scientific">Methanocella arvoryzae (strain DSM 22066 / NBRC 105507 / MRE50)</name>
    <dbReference type="NCBI Taxonomy" id="351160"/>
    <lineage>
        <taxon>Archaea</taxon>
        <taxon>Methanobacteriati</taxon>
        <taxon>Methanobacteriota</taxon>
        <taxon>Stenosarchaea group</taxon>
        <taxon>Methanomicrobia</taxon>
        <taxon>Methanocellales</taxon>
        <taxon>Methanocellaceae</taxon>
        <taxon>Methanocella</taxon>
    </lineage>
</organism>
<comment type="function">
    <text evidence="1">Catalyzes the NAD(P)(+)-dependent oxidation of D-glucose to D-gluconate via gluconolactone. Can utilize both NAD(+) and NADP(+) as electron acceptor. Is involved in the degradation of glucose through a non-phosphorylative variant of the Entner-Doudoroff pathway.</text>
</comment>
<comment type="catalytic activity">
    <reaction evidence="1">
        <text>D-glucose + NAD(+) = D-glucono-1,5-lactone + NADH + H(+)</text>
        <dbReference type="Rhea" id="RHEA:14293"/>
        <dbReference type="ChEBI" id="CHEBI:4167"/>
        <dbReference type="ChEBI" id="CHEBI:15378"/>
        <dbReference type="ChEBI" id="CHEBI:16217"/>
        <dbReference type="ChEBI" id="CHEBI:57540"/>
        <dbReference type="ChEBI" id="CHEBI:57945"/>
        <dbReference type="EC" id="1.1.1.47"/>
    </reaction>
</comment>
<comment type="catalytic activity">
    <reaction evidence="1">
        <text>D-glucose + NADP(+) = D-glucono-1,5-lactone + NADPH + H(+)</text>
        <dbReference type="Rhea" id="RHEA:14405"/>
        <dbReference type="ChEBI" id="CHEBI:4167"/>
        <dbReference type="ChEBI" id="CHEBI:15378"/>
        <dbReference type="ChEBI" id="CHEBI:16217"/>
        <dbReference type="ChEBI" id="CHEBI:57783"/>
        <dbReference type="ChEBI" id="CHEBI:58349"/>
        <dbReference type="EC" id="1.1.1.47"/>
    </reaction>
</comment>
<comment type="cofactor">
    <cofactor evidence="1">
        <name>Zn(2+)</name>
        <dbReference type="ChEBI" id="CHEBI:29105"/>
    </cofactor>
</comment>
<comment type="similarity">
    <text evidence="1">Belongs to the zinc-containing alcohol dehydrogenase family. Glucose 1-dehydrogenase subfamily.</text>
</comment>
<reference key="1">
    <citation type="journal article" date="2006" name="Science">
        <title>Genome of rice cluster I archaea -- the key methane producers in the rice rhizosphere.</title>
        <authorList>
            <person name="Erkel C."/>
            <person name="Kube M."/>
            <person name="Reinhardt R."/>
            <person name="Liesack W."/>
        </authorList>
    </citation>
    <scope>NUCLEOTIDE SEQUENCE [LARGE SCALE GENOMIC DNA]</scope>
    <source>
        <strain>DSM 22066 / NBRC 105507 / MRE50</strain>
    </source>
</reference>
<evidence type="ECO:0000255" key="1">
    <source>
        <dbReference type="HAMAP-Rule" id="MF_02127"/>
    </source>
</evidence>
<name>GLCDH_METAR</name>
<proteinExistence type="inferred from homology"/>
<feature type="chain" id="PRO_0000414844" description="Glucose 1-dehydrogenase">
    <location>
        <begin position="1"/>
        <end position="359"/>
    </location>
</feature>
<feature type="binding site" evidence="1">
    <location>
        <position position="39"/>
    </location>
    <ligand>
        <name>Zn(2+)</name>
        <dbReference type="ChEBI" id="CHEBI:29105"/>
        <note>catalytic</note>
    </ligand>
</feature>
<feature type="binding site" evidence="1">
    <location>
        <position position="41"/>
    </location>
    <ligand>
        <name>substrate</name>
    </ligand>
</feature>
<feature type="binding site" evidence="1">
    <location>
        <position position="64"/>
    </location>
    <ligand>
        <name>Zn(2+)</name>
        <dbReference type="ChEBI" id="CHEBI:29105"/>
        <note>catalytic</note>
    </ligand>
</feature>
<feature type="binding site" evidence="1">
    <location>
        <position position="65"/>
    </location>
    <ligand>
        <name>Zn(2+)</name>
        <dbReference type="ChEBI" id="CHEBI:29105"/>
        <note>catalytic</note>
    </ligand>
</feature>
<feature type="binding site" evidence="1">
    <location>
        <position position="116"/>
    </location>
    <ligand>
        <name>substrate</name>
    </ligand>
</feature>
<feature type="binding site" evidence="1">
    <location>
        <position position="152"/>
    </location>
    <ligand>
        <name>substrate</name>
    </ligand>
</feature>
<feature type="binding site" evidence="1">
    <location>
        <position position="152"/>
    </location>
    <ligand>
        <name>Zn(2+)</name>
        <dbReference type="ChEBI" id="CHEBI:29105"/>
        <note>catalytic</note>
    </ligand>
</feature>
<feature type="binding site" evidence="1">
    <location>
        <begin position="183"/>
        <end position="186"/>
    </location>
    <ligand>
        <name>NADP(+)</name>
        <dbReference type="ChEBI" id="CHEBI:58349"/>
    </ligand>
</feature>
<protein>
    <recommendedName>
        <fullName evidence="1">Glucose 1-dehydrogenase</fullName>
        <shortName evidence="1">GDH</shortName>
        <shortName evidence="1">GlcDH</shortName>
        <ecNumber evidence="1">1.1.1.47</ecNumber>
    </recommendedName>
</protein>
<keyword id="KW-0119">Carbohydrate metabolism</keyword>
<keyword id="KW-0479">Metal-binding</keyword>
<keyword id="KW-0520">NAD</keyword>
<keyword id="KW-0521">NADP</keyword>
<keyword id="KW-0547">Nucleotide-binding</keyword>
<keyword id="KW-0560">Oxidoreductase</keyword>
<keyword id="KW-1185">Reference proteome</keyword>
<keyword id="KW-0862">Zinc</keyword>
<dbReference type="EC" id="1.1.1.47" evidence="1"/>
<dbReference type="EMBL" id="AM114193">
    <property type="protein sequence ID" value="CAJ36437.1"/>
    <property type="molecule type" value="Genomic_DNA"/>
</dbReference>
<dbReference type="RefSeq" id="WP_012036089.1">
    <property type="nucleotide sequence ID" value="NC_009464.1"/>
</dbReference>
<dbReference type="SMR" id="Q0W5A6"/>
<dbReference type="STRING" id="351160.RCIX1128"/>
<dbReference type="GeneID" id="5145761"/>
<dbReference type="KEGG" id="rci:RCIX1128"/>
<dbReference type="eggNOG" id="arCOG01459">
    <property type="taxonomic scope" value="Archaea"/>
</dbReference>
<dbReference type="OrthoDB" id="9358at2157"/>
<dbReference type="Proteomes" id="UP000000663">
    <property type="component" value="Chromosome"/>
</dbReference>
<dbReference type="GO" id="GO:0005536">
    <property type="term" value="F:D-glucose binding"/>
    <property type="evidence" value="ECO:0007669"/>
    <property type="project" value="UniProtKB-UniRule"/>
</dbReference>
<dbReference type="GO" id="GO:0047934">
    <property type="term" value="F:glucose 1-dehydrogenase (NAD+) activity"/>
    <property type="evidence" value="ECO:0007669"/>
    <property type="project" value="RHEA"/>
</dbReference>
<dbReference type="GO" id="GO:0047935">
    <property type="term" value="F:glucose 1-dehydrogenase (NADP+) activity"/>
    <property type="evidence" value="ECO:0007669"/>
    <property type="project" value="RHEA"/>
</dbReference>
<dbReference type="GO" id="GO:0070403">
    <property type="term" value="F:NAD+ binding"/>
    <property type="evidence" value="ECO:0007669"/>
    <property type="project" value="UniProtKB-UniRule"/>
</dbReference>
<dbReference type="GO" id="GO:0070401">
    <property type="term" value="F:NADP+ binding"/>
    <property type="evidence" value="ECO:0007669"/>
    <property type="project" value="UniProtKB-UniRule"/>
</dbReference>
<dbReference type="GO" id="GO:0008270">
    <property type="term" value="F:zinc ion binding"/>
    <property type="evidence" value="ECO:0007669"/>
    <property type="project" value="UniProtKB-UniRule"/>
</dbReference>
<dbReference type="GO" id="GO:0019595">
    <property type="term" value="P:non-phosphorylated glucose catabolic process"/>
    <property type="evidence" value="ECO:0007669"/>
    <property type="project" value="UniProtKB-UniRule"/>
</dbReference>
<dbReference type="CDD" id="cd08230">
    <property type="entry name" value="glucose_DH"/>
    <property type="match status" value="1"/>
</dbReference>
<dbReference type="Gene3D" id="3.90.180.10">
    <property type="entry name" value="Medium-chain alcohol dehydrogenases, catalytic domain"/>
    <property type="match status" value="1"/>
</dbReference>
<dbReference type="Gene3D" id="3.40.50.720">
    <property type="entry name" value="NAD(P)-binding Rossmann-like Domain"/>
    <property type="match status" value="1"/>
</dbReference>
<dbReference type="HAMAP" id="MF_02127">
    <property type="entry name" value="Glucose_DH"/>
    <property type="match status" value="1"/>
</dbReference>
<dbReference type="InterPro" id="IPR013154">
    <property type="entry name" value="ADH-like_N"/>
</dbReference>
<dbReference type="InterPro" id="IPR026583">
    <property type="entry name" value="Glc_1-DH_arc"/>
</dbReference>
<dbReference type="InterPro" id="IPR031640">
    <property type="entry name" value="Glu_dehyd_C"/>
</dbReference>
<dbReference type="InterPro" id="IPR011032">
    <property type="entry name" value="GroES-like_sf"/>
</dbReference>
<dbReference type="InterPro" id="IPR036291">
    <property type="entry name" value="NAD(P)-bd_dom_sf"/>
</dbReference>
<dbReference type="PANTHER" id="PTHR43189:SF2">
    <property type="entry name" value="GLUCOSE 1-DEHYDROGENASE"/>
    <property type="match status" value="1"/>
</dbReference>
<dbReference type="PANTHER" id="PTHR43189">
    <property type="entry name" value="ZINC-TYPE ALCOHOL DEHYDROGENASE-LIKE PROTEIN C1198.01-RELATED"/>
    <property type="match status" value="1"/>
</dbReference>
<dbReference type="Pfam" id="PF08240">
    <property type="entry name" value="ADH_N"/>
    <property type="match status" value="1"/>
</dbReference>
<dbReference type="Pfam" id="PF16912">
    <property type="entry name" value="Glu_dehyd_C"/>
    <property type="match status" value="1"/>
</dbReference>
<dbReference type="SUPFAM" id="SSF50129">
    <property type="entry name" value="GroES-like"/>
    <property type="match status" value="1"/>
</dbReference>
<dbReference type="SUPFAM" id="SSF51735">
    <property type="entry name" value="NAD(P)-binding Rossmann-fold domains"/>
    <property type="match status" value="1"/>
</dbReference>
<gene>
    <name evidence="1" type="primary">gdh</name>
    <name type="synonym">dhg</name>
    <name type="ordered locus">UNCMA_17640</name>
    <name type="ORF">RCIX1128</name>
</gene>